<sequence>MKRENRSKKYDYFNSSSNNSNKFSKTNFKKYFKIFKLVVYIFLIGLALTGCIQSFVVQSSPNVGAGLELYPSKDKVAPRVNVYKKEENGYVKDRNINELLKDEQSLQALKDFSKNHNGVYGKTKSSNSALAILEDNTYIDSDGQENKSIIYKDNSGKYLFFNDTLTTYDPINKFTDIYAIGRLTERDSDAIKFRENNPKIIEHLKLFKVSEVPISREYQPNIKFARDFLQALYDKTLKLPVYQNILRADGSKYASFNEFLTSLEKRTTNHLKTQLNKQELSEEDLNSITLSDSESAALNAYLTRVNPLISENGFTGLKKSLNNADDFELVYSQGEKIAQSDYGQIPVVTWGEYWNYGPFYALLVAPIASFTNWVASAFESGFGIVFAIIVVVVVTRLFIFGLTFKVTFSQYKQQELQGKKAKIDAKYAAYENNKMMKQRKQKEIQDLYKKHNISPIDFVASIAWSSPLFIAVWRVIQSVPVIKSNFFLGVNFSTASYQEILAKNWVYLWVVSLALIVQIISQILPRWLAKKKIKERANVYEMQSYKKNNKTQNIMLIVFMVFTITLQAGVQIYWIIGGLWTIGQTLFVHHFQKTSFFKNRVRPWLDRH</sequence>
<accession>Q98R58</accession>
<proteinExistence type="inferred from homology"/>
<gene>
    <name type="primary">yidC</name>
    <name type="ordered locus">MYPU_1520</name>
</gene>
<evidence type="ECO:0000250" key="1"/>
<evidence type="ECO:0000255" key="2"/>
<evidence type="ECO:0000305" key="3"/>
<reference key="1">
    <citation type="journal article" date="2001" name="Nucleic Acids Res.">
        <title>The complete genome sequence of the murine respiratory pathogen Mycoplasma pulmonis.</title>
        <authorList>
            <person name="Chambaud I."/>
            <person name="Heilig R."/>
            <person name="Ferris S."/>
            <person name="Barbe V."/>
            <person name="Samson D."/>
            <person name="Galisson F."/>
            <person name="Moszer I."/>
            <person name="Dybvig K."/>
            <person name="Wroblewski H."/>
            <person name="Viari A."/>
            <person name="Rocha E.P.C."/>
            <person name="Blanchard A."/>
        </authorList>
    </citation>
    <scope>NUCLEOTIDE SEQUENCE [LARGE SCALE GENOMIC DNA]</scope>
    <source>
        <strain>UAB CTIP</strain>
    </source>
</reference>
<keyword id="KW-1003">Cell membrane</keyword>
<keyword id="KW-0143">Chaperone</keyword>
<keyword id="KW-0472">Membrane</keyword>
<keyword id="KW-0653">Protein transport</keyword>
<keyword id="KW-1185">Reference proteome</keyword>
<keyword id="KW-0812">Transmembrane</keyword>
<keyword id="KW-1133">Transmembrane helix</keyword>
<keyword id="KW-0813">Transport</keyword>
<feature type="chain" id="PRO_0000124729" description="Membrane protein insertase YidC">
    <location>
        <begin position="1"/>
        <end position="608"/>
    </location>
</feature>
<feature type="transmembrane region" description="Helical" evidence="2">
    <location>
        <begin position="37"/>
        <end position="57"/>
    </location>
</feature>
<feature type="transmembrane region" description="Helical" evidence="2">
    <location>
        <begin position="382"/>
        <end position="402"/>
    </location>
</feature>
<feature type="transmembrane region" description="Helical" evidence="2">
    <location>
        <begin position="453"/>
        <end position="473"/>
    </location>
</feature>
<feature type="transmembrane region" description="Helical" evidence="2">
    <location>
        <begin position="505"/>
        <end position="525"/>
    </location>
</feature>
<feature type="transmembrane region" description="Helical" evidence="2">
    <location>
        <begin position="556"/>
        <end position="576"/>
    </location>
</feature>
<comment type="function">
    <text evidence="1">Required for the insertion and/or proper folding and/or complex formation of integral membrane proteins into the membrane. Involved in integration of membrane proteins that insert both dependently and independently of the Sec translocase complex, as well as at least some lipoproteins. Aids folding of multispanning membrane proteins (By similarity).</text>
</comment>
<comment type="subunit">
    <text evidence="1">Interacts with the Sec translocase complex via SecD. Specifically interacts with transmembrane segments of nascent integral membrane proteins during membrane integration (By similarity).</text>
</comment>
<comment type="subcellular location">
    <subcellularLocation>
        <location evidence="1">Cell membrane</location>
        <topology evidence="1">Multi-pass membrane protein</topology>
    </subcellularLocation>
</comment>
<comment type="similarity">
    <text evidence="3">Belongs to the OXA1/ALB3/YidC family. Type 1 subfamily.</text>
</comment>
<protein>
    <recommendedName>
        <fullName>Membrane protein insertase YidC</fullName>
    </recommendedName>
    <alternativeName>
        <fullName>Foldase YidC</fullName>
    </alternativeName>
    <alternativeName>
        <fullName>Membrane integrase YidC</fullName>
    </alternativeName>
    <alternativeName>
        <fullName>Membrane protein YidC</fullName>
    </alternativeName>
</protein>
<organism>
    <name type="scientific">Mycoplasmopsis pulmonis (strain UAB CTIP)</name>
    <name type="common">Mycoplasma pulmonis</name>
    <dbReference type="NCBI Taxonomy" id="272635"/>
    <lineage>
        <taxon>Bacteria</taxon>
        <taxon>Bacillati</taxon>
        <taxon>Mycoplasmatota</taxon>
        <taxon>Mycoplasmoidales</taxon>
        <taxon>Metamycoplasmataceae</taxon>
        <taxon>Mycoplasmopsis</taxon>
    </lineage>
</organism>
<dbReference type="EMBL" id="AL445563">
    <property type="protein sequence ID" value="CAC13325.1"/>
    <property type="molecule type" value="Genomic_DNA"/>
</dbReference>
<dbReference type="PIR" id="H90530">
    <property type="entry name" value="H90530"/>
</dbReference>
<dbReference type="RefSeq" id="WP_010924956.1">
    <property type="nucleotide sequence ID" value="NC_002771.1"/>
</dbReference>
<dbReference type="STRING" id="272635.gene:17576736"/>
<dbReference type="KEGG" id="mpu:MYPU_1520"/>
<dbReference type="eggNOG" id="COG0706">
    <property type="taxonomic scope" value="Bacteria"/>
</dbReference>
<dbReference type="HOGENOM" id="CLU_031187_0_0_14"/>
<dbReference type="BioCyc" id="MPUL272635:G1GT6-153-MONOMER"/>
<dbReference type="Proteomes" id="UP000000528">
    <property type="component" value="Chromosome"/>
</dbReference>
<dbReference type="GO" id="GO:0005886">
    <property type="term" value="C:plasma membrane"/>
    <property type="evidence" value="ECO:0007669"/>
    <property type="project" value="UniProtKB-SubCell"/>
</dbReference>
<dbReference type="GO" id="GO:0032977">
    <property type="term" value="F:membrane insertase activity"/>
    <property type="evidence" value="ECO:0007669"/>
    <property type="project" value="InterPro"/>
</dbReference>
<dbReference type="GO" id="GO:0051205">
    <property type="term" value="P:protein insertion into membrane"/>
    <property type="evidence" value="ECO:0007669"/>
    <property type="project" value="TreeGrafter"/>
</dbReference>
<dbReference type="GO" id="GO:0015031">
    <property type="term" value="P:protein transport"/>
    <property type="evidence" value="ECO:0007669"/>
    <property type="project" value="UniProtKB-KW"/>
</dbReference>
<dbReference type="CDD" id="cd20070">
    <property type="entry name" value="5TM_YidC_Alb3"/>
    <property type="match status" value="1"/>
</dbReference>
<dbReference type="InterPro" id="IPR001708">
    <property type="entry name" value="YidC/ALB3/OXA1/COX18"/>
</dbReference>
<dbReference type="InterPro" id="IPR028055">
    <property type="entry name" value="YidC/Oxa/ALB_C"/>
</dbReference>
<dbReference type="InterPro" id="IPR047196">
    <property type="entry name" value="YidC_ALB_C"/>
</dbReference>
<dbReference type="NCBIfam" id="NF002567">
    <property type="entry name" value="PRK02201.1-2"/>
    <property type="match status" value="1"/>
</dbReference>
<dbReference type="NCBIfam" id="TIGR03592">
    <property type="entry name" value="yidC_oxa1_cterm"/>
    <property type="match status" value="1"/>
</dbReference>
<dbReference type="PANTHER" id="PTHR12428:SF65">
    <property type="entry name" value="CYTOCHROME C OXIDASE ASSEMBLY PROTEIN COX18, MITOCHONDRIAL"/>
    <property type="match status" value="1"/>
</dbReference>
<dbReference type="PANTHER" id="PTHR12428">
    <property type="entry name" value="OXA1"/>
    <property type="match status" value="1"/>
</dbReference>
<dbReference type="Pfam" id="PF02096">
    <property type="entry name" value="60KD_IMP"/>
    <property type="match status" value="1"/>
</dbReference>
<name>YIDC_MYCPU</name>